<protein>
    <recommendedName>
        <fullName evidence="1">ATP synthase subunit alpha</fullName>
        <ecNumber evidence="1">7.1.2.2</ecNumber>
    </recommendedName>
    <alternativeName>
        <fullName evidence="1">ATP synthase F1 sector subunit alpha</fullName>
    </alternativeName>
    <alternativeName>
        <fullName evidence="1">F-ATPase subunit alpha</fullName>
    </alternativeName>
</protein>
<sequence length="502" mass="54679">MSIRAEEISALLKARIAQYGSTMEVNETGTVIQIGDGIARAHGLDNVMSGELVEFANGTMGLAQNLEEGNVGIIILGDYLEIKEGDSVRRTGRIMEVPTGDALLGRVVNPLGMPIDGLGPIETEHYNPIERKASGVMARKSVHEPLQTGIKAIDALVPIGRGQRELIIGDRQTGKTSIAIDTIINQKEENMICIYVAIGQKESTVRGVVETLRKNGALDYTIVVSAAASQPAPLLYLAPFAGVAMGEHFMDLGKHVLVIYDDLSKQAAAYRELSLLLKRPPGREAYPGDVFYLHSRLLERAAKLNDGLGAGSLTALPFIETQASDISAYIPTNVISITDGQIFLQSDLFFSGVRPAINPGLSVSRVGGSAQVKAMKKVAGTLRLDLASYRELEAFSQFGSDLDKATQSKLNRGERTVEVLKQDLNQPLTVDKQVIIIYALTRGHLDDVAVSDIRRFEKELNLWLDQNRKQLCDEIRKTGNLPADEEIVTAISEFKKTFQPTV</sequence>
<organism>
    <name type="scientific">Exiguobacterium sibiricum (strain DSM 17290 / CCUG 55495 / CIP 109462 / JCM 13490 / 255-15)</name>
    <dbReference type="NCBI Taxonomy" id="262543"/>
    <lineage>
        <taxon>Bacteria</taxon>
        <taxon>Bacillati</taxon>
        <taxon>Bacillota</taxon>
        <taxon>Bacilli</taxon>
        <taxon>Bacillales</taxon>
        <taxon>Bacillales Family XII. Incertae Sedis</taxon>
        <taxon>Exiguobacterium</taxon>
    </lineage>
</organism>
<keyword id="KW-0066">ATP synthesis</keyword>
<keyword id="KW-0067">ATP-binding</keyword>
<keyword id="KW-1003">Cell membrane</keyword>
<keyword id="KW-0139">CF(1)</keyword>
<keyword id="KW-0375">Hydrogen ion transport</keyword>
<keyword id="KW-0406">Ion transport</keyword>
<keyword id="KW-0472">Membrane</keyword>
<keyword id="KW-0547">Nucleotide-binding</keyword>
<keyword id="KW-1185">Reference proteome</keyword>
<keyword id="KW-1278">Translocase</keyword>
<keyword id="KW-0813">Transport</keyword>
<accession>B1YMR6</accession>
<dbReference type="EC" id="7.1.2.2" evidence="1"/>
<dbReference type="EMBL" id="CP001022">
    <property type="protein sequence ID" value="ACB62126.1"/>
    <property type="molecule type" value="Genomic_DNA"/>
</dbReference>
<dbReference type="RefSeq" id="WP_012371542.1">
    <property type="nucleotide sequence ID" value="NC_010556.1"/>
</dbReference>
<dbReference type="SMR" id="B1YMR6"/>
<dbReference type="STRING" id="262543.Exig_2678"/>
<dbReference type="KEGG" id="esi:Exig_2678"/>
<dbReference type="eggNOG" id="COG0056">
    <property type="taxonomic scope" value="Bacteria"/>
</dbReference>
<dbReference type="HOGENOM" id="CLU_010091_2_1_9"/>
<dbReference type="OrthoDB" id="9803053at2"/>
<dbReference type="Proteomes" id="UP000001681">
    <property type="component" value="Chromosome"/>
</dbReference>
<dbReference type="GO" id="GO:0005886">
    <property type="term" value="C:plasma membrane"/>
    <property type="evidence" value="ECO:0007669"/>
    <property type="project" value="UniProtKB-SubCell"/>
</dbReference>
<dbReference type="GO" id="GO:0045259">
    <property type="term" value="C:proton-transporting ATP synthase complex"/>
    <property type="evidence" value="ECO:0007669"/>
    <property type="project" value="UniProtKB-KW"/>
</dbReference>
<dbReference type="GO" id="GO:0043531">
    <property type="term" value="F:ADP binding"/>
    <property type="evidence" value="ECO:0007669"/>
    <property type="project" value="TreeGrafter"/>
</dbReference>
<dbReference type="GO" id="GO:0005524">
    <property type="term" value="F:ATP binding"/>
    <property type="evidence" value="ECO:0007669"/>
    <property type="project" value="UniProtKB-UniRule"/>
</dbReference>
<dbReference type="GO" id="GO:0046933">
    <property type="term" value="F:proton-transporting ATP synthase activity, rotational mechanism"/>
    <property type="evidence" value="ECO:0007669"/>
    <property type="project" value="UniProtKB-UniRule"/>
</dbReference>
<dbReference type="CDD" id="cd18113">
    <property type="entry name" value="ATP-synt_F1_alpha_C"/>
    <property type="match status" value="1"/>
</dbReference>
<dbReference type="CDD" id="cd18116">
    <property type="entry name" value="ATP-synt_F1_alpha_N"/>
    <property type="match status" value="1"/>
</dbReference>
<dbReference type="CDD" id="cd01132">
    <property type="entry name" value="F1-ATPase_alpha_CD"/>
    <property type="match status" value="1"/>
</dbReference>
<dbReference type="FunFam" id="1.20.150.20:FF:000001">
    <property type="entry name" value="ATP synthase subunit alpha"/>
    <property type="match status" value="1"/>
</dbReference>
<dbReference type="FunFam" id="2.40.30.20:FF:000001">
    <property type="entry name" value="ATP synthase subunit alpha"/>
    <property type="match status" value="1"/>
</dbReference>
<dbReference type="FunFam" id="3.40.50.300:FF:000002">
    <property type="entry name" value="ATP synthase subunit alpha"/>
    <property type="match status" value="1"/>
</dbReference>
<dbReference type="Gene3D" id="2.40.30.20">
    <property type="match status" value="1"/>
</dbReference>
<dbReference type="Gene3D" id="1.20.150.20">
    <property type="entry name" value="ATP synthase alpha/beta chain, C-terminal domain"/>
    <property type="match status" value="1"/>
</dbReference>
<dbReference type="Gene3D" id="3.40.50.300">
    <property type="entry name" value="P-loop containing nucleotide triphosphate hydrolases"/>
    <property type="match status" value="1"/>
</dbReference>
<dbReference type="HAMAP" id="MF_01346">
    <property type="entry name" value="ATP_synth_alpha_bact"/>
    <property type="match status" value="1"/>
</dbReference>
<dbReference type="InterPro" id="IPR023366">
    <property type="entry name" value="ATP_synth_asu-like_sf"/>
</dbReference>
<dbReference type="InterPro" id="IPR000793">
    <property type="entry name" value="ATP_synth_asu_C"/>
</dbReference>
<dbReference type="InterPro" id="IPR038376">
    <property type="entry name" value="ATP_synth_asu_C_sf"/>
</dbReference>
<dbReference type="InterPro" id="IPR033732">
    <property type="entry name" value="ATP_synth_F1_a_nt-bd_dom"/>
</dbReference>
<dbReference type="InterPro" id="IPR005294">
    <property type="entry name" value="ATP_synth_F1_asu"/>
</dbReference>
<dbReference type="InterPro" id="IPR020003">
    <property type="entry name" value="ATPase_a/bsu_AS"/>
</dbReference>
<dbReference type="InterPro" id="IPR004100">
    <property type="entry name" value="ATPase_F1/V1/A1_a/bsu_N"/>
</dbReference>
<dbReference type="InterPro" id="IPR036121">
    <property type="entry name" value="ATPase_F1/V1/A1_a/bsu_N_sf"/>
</dbReference>
<dbReference type="InterPro" id="IPR000194">
    <property type="entry name" value="ATPase_F1/V1/A1_a/bsu_nucl-bd"/>
</dbReference>
<dbReference type="InterPro" id="IPR027417">
    <property type="entry name" value="P-loop_NTPase"/>
</dbReference>
<dbReference type="NCBIfam" id="TIGR00962">
    <property type="entry name" value="atpA"/>
    <property type="match status" value="1"/>
</dbReference>
<dbReference type="NCBIfam" id="NF009884">
    <property type="entry name" value="PRK13343.1"/>
    <property type="match status" value="1"/>
</dbReference>
<dbReference type="PANTHER" id="PTHR48082">
    <property type="entry name" value="ATP SYNTHASE SUBUNIT ALPHA, MITOCHONDRIAL"/>
    <property type="match status" value="1"/>
</dbReference>
<dbReference type="PANTHER" id="PTHR48082:SF2">
    <property type="entry name" value="ATP SYNTHASE SUBUNIT ALPHA, MITOCHONDRIAL"/>
    <property type="match status" value="1"/>
</dbReference>
<dbReference type="Pfam" id="PF00006">
    <property type="entry name" value="ATP-synt_ab"/>
    <property type="match status" value="1"/>
</dbReference>
<dbReference type="Pfam" id="PF00306">
    <property type="entry name" value="ATP-synt_ab_C"/>
    <property type="match status" value="1"/>
</dbReference>
<dbReference type="Pfam" id="PF02874">
    <property type="entry name" value="ATP-synt_ab_N"/>
    <property type="match status" value="1"/>
</dbReference>
<dbReference type="PIRSF" id="PIRSF039088">
    <property type="entry name" value="F_ATPase_subunit_alpha"/>
    <property type="match status" value="1"/>
</dbReference>
<dbReference type="SUPFAM" id="SSF47917">
    <property type="entry name" value="C-terminal domain of alpha and beta subunits of F1 ATP synthase"/>
    <property type="match status" value="1"/>
</dbReference>
<dbReference type="SUPFAM" id="SSF50615">
    <property type="entry name" value="N-terminal domain of alpha and beta subunits of F1 ATP synthase"/>
    <property type="match status" value="1"/>
</dbReference>
<dbReference type="SUPFAM" id="SSF52540">
    <property type="entry name" value="P-loop containing nucleoside triphosphate hydrolases"/>
    <property type="match status" value="1"/>
</dbReference>
<dbReference type="PROSITE" id="PS00152">
    <property type="entry name" value="ATPASE_ALPHA_BETA"/>
    <property type="match status" value="1"/>
</dbReference>
<name>ATPA_EXIS2</name>
<comment type="function">
    <text evidence="1">Produces ATP from ADP in the presence of a proton gradient across the membrane. The alpha chain is a regulatory subunit.</text>
</comment>
<comment type="catalytic activity">
    <reaction evidence="1">
        <text>ATP + H2O + 4 H(+)(in) = ADP + phosphate + 5 H(+)(out)</text>
        <dbReference type="Rhea" id="RHEA:57720"/>
        <dbReference type="ChEBI" id="CHEBI:15377"/>
        <dbReference type="ChEBI" id="CHEBI:15378"/>
        <dbReference type="ChEBI" id="CHEBI:30616"/>
        <dbReference type="ChEBI" id="CHEBI:43474"/>
        <dbReference type="ChEBI" id="CHEBI:456216"/>
        <dbReference type="EC" id="7.1.2.2"/>
    </reaction>
</comment>
<comment type="subunit">
    <text evidence="1">F-type ATPases have 2 components, CF(1) - the catalytic core - and CF(0) - the membrane proton channel. CF(1) has five subunits: alpha(3), beta(3), gamma(1), delta(1), epsilon(1). CF(0) has three main subunits: a(1), b(2) and c(9-12). The alpha and beta chains form an alternating ring which encloses part of the gamma chain. CF(1) is attached to CF(0) by a central stalk formed by the gamma and epsilon chains, while a peripheral stalk is formed by the delta and b chains.</text>
</comment>
<comment type="subcellular location">
    <subcellularLocation>
        <location evidence="1">Cell membrane</location>
        <topology evidence="1">Peripheral membrane protein</topology>
    </subcellularLocation>
</comment>
<comment type="similarity">
    <text evidence="1">Belongs to the ATPase alpha/beta chains family.</text>
</comment>
<feature type="chain" id="PRO_1000143383" description="ATP synthase subunit alpha">
    <location>
        <begin position="1"/>
        <end position="502"/>
    </location>
</feature>
<feature type="binding site" evidence="1">
    <location>
        <begin position="169"/>
        <end position="176"/>
    </location>
    <ligand>
        <name>ATP</name>
        <dbReference type="ChEBI" id="CHEBI:30616"/>
    </ligand>
</feature>
<feature type="site" description="Required for activity" evidence="1">
    <location>
        <position position="362"/>
    </location>
</feature>
<evidence type="ECO:0000255" key="1">
    <source>
        <dbReference type="HAMAP-Rule" id="MF_01346"/>
    </source>
</evidence>
<gene>
    <name evidence="1" type="primary">atpA</name>
    <name type="ordered locus">Exig_2678</name>
</gene>
<proteinExistence type="inferred from homology"/>
<reference key="1">
    <citation type="submission" date="2008-04" db="EMBL/GenBank/DDBJ databases">
        <title>Complete sequence of chromosome of Exiguobacterium sibiricum 255-15.</title>
        <authorList>
            <consortium name="US DOE Joint Genome Institute"/>
            <person name="Copeland A."/>
            <person name="Lucas S."/>
            <person name="Lapidus A."/>
            <person name="Glavina del Rio T."/>
            <person name="Dalin E."/>
            <person name="Tice H."/>
            <person name="Bruce D."/>
            <person name="Goodwin L."/>
            <person name="Pitluck S."/>
            <person name="Kiss H."/>
            <person name="Chertkov O."/>
            <person name="Monk C."/>
            <person name="Brettin T."/>
            <person name="Detter J.C."/>
            <person name="Han C."/>
            <person name="Kuske C.R."/>
            <person name="Schmutz J."/>
            <person name="Larimer F."/>
            <person name="Land M."/>
            <person name="Hauser L."/>
            <person name="Kyrpides N."/>
            <person name="Mikhailova N."/>
            <person name="Vishnivetskaya T."/>
            <person name="Rodrigues D.F."/>
            <person name="Gilichinsky D."/>
            <person name="Tiedje J."/>
            <person name="Richardson P."/>
        </authorList>
    </citation>
    <scope>NUCLEOTIDE SEQUENCE [LARGE SCALE GENOMIC DNA]</scope>
    <source>
        <strain>DSM 17290 / CCUG 55495 / CIP 109462 / JCM 13490 / 255-15</strain>
    </source>
</reference>